<gene>
    <name evidence="1" type="primary">spoIIAB</name>
    <name type="ordered locus">BC_4073</name>
</gene>
<feature type="chain" id="PRO_0000203551" description="Anti-sigma F factor">
    <location>
        <begin position="1"/>
        <end position="146"/>
    </location>
</feature>
<accession>Q819B3</accession>
<keyword id="KW-0067">ATP-binding</keyword>
<keyword id="KW-0418">Kinase</keyword>
<keyword id="KW-0547">Nucleotide-binding</keyword>
<keyword id="KW-1185">Reference proteome</keyword>
<keyword id="KW-0723">Serine/threonine-protein kinase</keyword>
<keyword id="KW-0749">Sporulation</keyword>
<keyword id="KW-0808">Transferase</keyword>
<dbReference type="EC" id="2.7.11.1" evidence="1"/>
<dbReference type="EMBL" id="AE016877">
    <property type="protein sequence ID" value="AAP10992.1"/>
    <property type="molecule type" value="Genomic_DNA"/>
</dbReference>
<dbReference type="RefSeq" id="NP_833791.1">
    <property type="nucleotide sequence ID" value="NC_004722.1"/>
</dbReference>
<dbReference type="RefSeq" id="WP_001243393.1">
    <property type="nucleotide sequence ID" value="NC_004722.1"/>
</dbReference>
<dbReference type="SMR" id="Q819B3"/>
<dbReference type="STRING" id="226900.BC_4073"/>
<dbReference type="KEGG" id="bce:BC4073"/>
<dbReference type="PATRIC" id="fig|226900.8.peg.4207"/>
<dbReference type="HOGENOM" id="CLU_090336_11_0_9"/>
<dbReference type="Proteomes" id="UP000001417">
    <property type="component" value="Chromosome"/>
</dbReference>
<dbReference type="GO" id="GO:0005524">
    <property type="term" value="F:ATP binding"/>
    <property type="evidence" value="ECO:0007669"/>
    <property type="project" value="UniProtKB-KW"/>
</dbReference>
<dbReference type="GO" id="GO:0106310">
    <property type="term" value="F:protein serine kinase activity"/>
    <property type="evidence" value="ECO:0007669"/>
    <property type="project" value="RHEA"/>
</dbReference>
<dbReference type="GO" id="GO:0004674">
    <property type="term" value="F:protein serine/threonine kinase activity"/>
    <property type="evidence" value="ECO:0007669"/>
    <property type="project" value="UniProtKB-KW"/>
</dbReference>
<dbReference type="GO" id="GO:0016989">
    <property type="term" value="F:sigma factor antagonist activity"/>
    <property type="evidence" value="ECO:0000318"/>
    <property type="project" value="GO_Central"/>
</dbReference>
<dbReference type="GO" id="GO:0030436">
    <property type="term" value="P:asexual sporulation"/>
    <property type="evidence" value="ECO:0007669"/>
    <property type="project" value="UniProtKB-UniRule"/>
</dbReference>
<dbReference type="GO" id="GO:0045892">
    <property type="term" value="P:negative regulation of DNA-templated transcription"/>
    <property type="evidence" value="ECO:0000318"/>
    <property type="project" value="GO_Central"/>
</dbReference>
<dbReference type="GO" id="GO:0042174">
    <property type="term" value="P:negative regulation of sporulation resulting in formation of a cellular spore"/>
    <property type="evidence" value="ECO:0007669"/>
    <property type="project" value="InterPro"/>
</dbReference>
<dbReference type="GO" id="GO:0030435">
    <property type="term" value="P:sporulation resulting in formation of a cellular spore"/>
    <property type="evidence" value="ECO:0007669"/>
    <property type="project" value="UniProtKB-KW"/>
</dbReference>
<dbReference type="FunFam" id="3.30.565.10:FF:000022">
    <property type="entry name" value="Anti-sigma F factor"/>
    <property type="match status" value="1"/>
</dbReference>
<dbReference type="Gene3D" id="3.30.565.10">
    <property type="entry name" value="Histidine kinase-like ATPase, C-terminal domain"/>
    <property type="match status" value="1"/>
</dbReference>
<dbReference type="HAMAP" id="MF_00637">
    <property type="entry name" value="Anti_sigma_F"/>
    <property type="match status" value="1"/>
</dbReference>
<dbReference type="InterPro" id="IPR050267">
    <property type="entry name" value="Anti-sigma-factor_SerPK"/>
</dbReference>
<dbReference type="InterPro" id="IPR010194">
    <property type="entry name" value="Anti-sigma_F"/>
</dbReference>
<dbReference type="InterPro" id="IPR036890">
    <property type="entry name" value="HATPase_C_sf"/>
</dbReference>
<dbReference type="NCBIfam" id="TIGR01925">
    <property type="entry name" value="spIIAB"/>
    <property type="match status" value="1"/>
</dbReference>
<dbReference type="PANTHER" id="PTHR35526:SF3">
    <property type="entry name" value="ANTI-SIGMA-F FACTOR RSBW"/>
    <property type="match status" value="1"/>
</dbReference>
<dbReference type="PANTHER" id="PTHR35526">
    <property type="entry name" value="ANTI-SIGMA-F FACTOR RSBW-RELATED"/>
    <property type="match status" value="1"/>
</dbReference>
<dbReference type="Pfam" id="PF13581">
    <property type="entry name" value="HATPase_c_2"/>
    <property type="match status" value="1"/>
</dbReference>
<dbReference type="SMART" id="SM00387">
    <property type="entry name" value="HATPase_c"/>
    <property type="match status" value="1"/>
</dbReference>
<dbReference type="SUPFAM" id="SSF55874">
    <property type="entry name" value="ATPase domain of HSP90 chaperone/DNA topoisomerase II/histidine kinase"/>
    <property type="match status" value="1"/>
</dbReference>
<name>SP2AB_BACCR</name>
<reference key="1">
    <citation type="journal article" date="2003" name="Nature">
        <title>Genome sequence of Bacillus cereus and comparative analysis with Bacillus anthracis.</title>
        <authorList>
            <person name="Ivanova N."/>
            <person name="Sorokin A."/>
            <person name="Anderson I."/>
            <person name="Galleron N."/>
            <person name="Candelon B."/>
            <person name="Kapatral V."/>
            <person name="Bhattacharyya A."/>
            <person name="Reznik G."/>
            <person name="Mikhailova N."/>
            <person name="Lapidus A."/>
            <person name="Chu L."/>
            <person name="Mazur M."/>
            <person name="Goltsman E."/>
            <person name="Larsen N."/>
            <person name="D'Souza M."/>
            <person name="Walunas T."/>
            <person name="Grechkin Y."/>
            <person name="Pusch G."/>
            <person name="Haselkorn R."/>
            <person name="Fonstein M."/>
            <person name="Ehrlich S.D."/>
            <person name="Overbeek R."/>
            <person name="Kyrpides N.C."/>
        </authorList>
    </citation>
    <scope>NUCLEOTIDE SEQUENCE [LARGE SCALE GENOMIC DNA]</scope>
    <source>
        <strain>ATCC 14579 / DSM 31 / CCUG 7414 / JCM 2152 / NBRC 15305 / NCIMB 9373 / NCTC 2599 / NRRL B-3711</strain>
    </source>
</reference>
<organism>
    <name type="scientific">Bacillus cereus (strain ATCC 14579 / DSM 31 / CCUG 7414 / JCM 2152 / NBRC 15305 / NCIMB 9373 / NCTC 2599 / NRRL B-3711)</name>
    <dbReference type="NCBI Taxonomy" id="226900"/>
    <lineage>
        <taxon>Bacteria</taxon>
        <taxon>Bacillati</taxon>
        <taxon>Bacillota</taxon>
        <taxon>Bacilli</taxon>
        <taxon>Bacillales</taxon>
        <taxon>Bacillaceae</taxon>
        <taxon>Bacillus</taxon>
        <taxon>Bacillus cereus group</taxon>
    </lineage>
</organism>
<protein>
    <recommendedName>
        <fullName evidence="1">Anti-sigma F factor</fullName>
        <ecNumber evidence="1">2.7.11.1</ecNumber>
    </recommendedName>
    <alternativeName>
        <fullName evidence="1">Stage II sporulation protein AB</fullName>
    </alternativeName>
</protein>
<proteinExistence type="inferred from homology"/>
<sequence>MRNEMNLQFSALSQNESFARVHRAAFIAQLDPTMEELTEIKTVVSEAVTNAIIHGYEGNAEGIVYISVILEEAMVKLTIRDEGIGIFNLDEARQPLFTTKPELERSGMGFTIMENFMDEVEVISNESFGTTIHLTKYLSNSNALCN</sequence>
<comment type="function">
    <text evidence="1">Binds to sigma F and blocks its ability to form an RNA polymerase holoenzyme (E-sigma F). Phosphorylates SpoIIAA on a serine residue. This phosphorylation may enable SpoIIAA to act as an anti-anti-sigma factor that counteracts SpoIIAB and thus releases sigma F from inhibition.</text>
</comment>
<comment type="catalytic activity">
    <reaction evidence="1">
        <text>L-seryl-[protein] + ATP = O-phospho-L-seryl-[protein] + ADP + H(+)</text>
        <dbReference type="Rhea" id="RHEA:17989"/>
        <dbReference type="Rhea" id="RHEA-COMP:9863"/>
        <dbReference type="Rhea" id="RHEA-COMP:11604"/>
        <dbReference type="ChEBI" id="CHEBI:15378"/>
        <dbReference type="ChEBI" id="CHEBI:29999"/>
        <dbReference type="ChEBI" id="CHEBI:30616"/>
        <dbReference type="ChEBI" id="CHEBI:83421"/>
        <dbReference type="ChEBI" id="CHEBI:456216"/>
        <dbReference type="EC" id="2.7.11.1"/>
    </reaction>
</comment>
<comment type="catalytic activity">
    <reaction evidence="1">
        <text>L-threonyl-[protein] + ATP = O-phospho-L-threonyl-[protein] + ADP + H(+)</text>
        <dbReference type="Rhea" id="RHEA:46608"/>
        <dbReference type="Rhea" id="RHEA-COMP:11060"/>
        <dbReference type="Rhea" id="RHEA-COMP:11605"/>
        <dbReference type="ChEBI" id="CHEBI:15378"/>
        <dbReference type="ChEBI" id="CHEBI:30013"/>
        <dbReference type="ChEBI" id="CHEBI:30616"/>
        <dbReference type="ChEBI" id="CHEBI:61977"/>
        <dbReference type="ChEBI" id="CHEBI:456216"/>
        <dbReference type="EC" id="2.7.11.1"/>
    </reaction>
</comment>
<comment type="similarity">
    <text evidence="1">Belongs to the anti-sigma-factor family.</text>
</comment>
<evidence type="ECO:0000255" key="1">
    <source>
        <dbReference type="HAMAP-Rule" id="MF_00637"/>
    </source>
</evidence>